<sequence>MTVKKVTRLRRARKARLKMHELEVVRLCVHRSSQHIYAQVISADGSKVLASASTLDKELRDGATGNIDAATKVGKLVAERAKAAGVSQVAFDRSGFKYHGRVKALADAAREGGLEF</sequence>
<accession>Q4ZMR0</accession>
<reference key="1">
    <citation type="journal article" date="2005" name="Proc. Natl. Acad. Sci. U.S.A.">
        <title>Comparison of the complete genome sequences of Pseudomonas syringae pv. syringae B728a and pv. tomato DC3000.</title>
        <authorList>
            <person name="Feil H."/>
            <person name="Feil W.S."/>
            <person name="Chain P."/>
            <person name="Larimer F."/>
            <person name="Dibartolo G."/>
            <person name="Copeland A."/>
            <person name="Lykidis A."/>
            <person name="Trong S."/>
            <person name="Nolan M."/>
            <person name="Goltsman E."/>
            <person name="Thiel J."/>
            <person name="Malfatti S."/>
            <person name="Loper J.E."/>
            <person name="Lapidus A."/>
            <person name="Detter J.C."/>
            <person name="Land M."/>
            <person name="Richardson P.M."/>
            <person name="Kyrpides N.C."/>
            <person name="Ivanova N."/>
            <person name="Lindow S.E."/>
        </authorList>
    </citation>
    <scope>NUCLEOTIDE SEQUENCE [LARGE SCALE GENOMIC DNA]</scope>
    <source>
        <strain>B728a</strain>
    </source>
</reference>
<feature type="chain" id="PRO_0000251348" description="Large ribosomal subunit protein uL18">
    <location>
        <begin position="1"/>
        <end position="116"/>
    </location>
</feature>
<dbReference type="EMBL" id="CP000075">
    <property type="protein sequence ID" value="AAY39562.1"/>
    <property type="molecule type" value="Genomic_DNA"/>
</dbReference>
<dbReference type="RefSeq" id="WP_002555473.1">
    <property type="nucleotide sequence ID" value="NC_007005.1"/>
</dbReference>
<dbReference type="RefSeq" id="YP_237600.1">
    <property type="nucleotide sequence ID" value="NC_007005.1"/>
</dbReference>
<dbReference type="SMR" id="Q4ZMR0"/>
<dbReference type="STRING" id="205918.Psyr_4532"/>
<dbReference type="GeneID" id="96221014"/>
<dbReference type="KEGG" id="psb:Psyr_4532"/>
<dbReference type="PATRIC" id="fig|205918.7.peg.4671"/>
<dbReference type="eggNOG" id="COG0256">
    <property type="taxonomic scope" value="Bacteria"/>
</dbReference>
<dbReference type="HOGENOM" id="CLU_098841_0_1_6"/>
<dbReference type="OrthoDB" id="9810939at2"/>
<dbReference type="Proteomes" id="UP000000426">
    <property type="component" value="Chromosome"/>
</dbReference>
<dbReference type="GO" id="GO:0022625">
    <property type="term" value="C:cytosolic large ribosomal subunit"/>
    <property type="evidence" value="ECO:0007669"/>
    <property type="project" value="TreeGrafter"/>
</dbReference>
<dbReference type="GO" id="GO:0008097">
    <property type="term" value="F:5S rRNA binding"/>
    <property type="evidence" value="ECO:0007669"/>
    <property type="project" value="TreeGrafter"/>
</dbReference>
<dbReference type="GO" id="GO:0003735">
    <property type="term" value="F:structural constituent of ribosome"/>
    <property type="evidence" value="ECO:0007669"/>
    <property type="project" value="InterPro"/>
</dbReference>
<dbReference type="GO" id="GO:0006412">
    <property type="term" value="P:translation"/>
    <property type="evidence" value="ECO:0007669"/>
    <property type="project" value="UniProtKB-UniRule"/>
</dbReference>
<dbReference type="CDD" id="cd00432">
    <property type="entry name" value="Ribosomal_L18_L5e"/>
    <property type="match status" value="1"/>
</dbReference>
<dbReference type="FunFam" id="3.30.420.100:FF:000001">
    <property type="entry name" value="50S ribosomal protein L18"/>
    <property type="match status" value="1"/>
</dbReference>
<dbReference type="Gene3D" id="3.30.420.100">
    <property type="match status" value="1"/>
</dbReference>
<dbReference type="HAMAP" id="MF_01337_B">
    <property type="entry name" value="Ribosomal_uL18_B"/>
    <property type="match status" value="1"/>
</dbReference>
<dbReference type="InterPro" id="IPR004389">
    <property type="entry name" value="Ribosomal_uL18_bac-type"/>
</dbReference>
<dbReference type="InterPro" id="IPR005484">
    <property type="entry name" value="Ribosomal_uL18_bac/euk"/>
</dbReference>
<dbReference type="NCBIfam" id="TIGR00060">
    <property type="entry name" value="L18_bact"/>
    <property type="match status" value="1"/>
</dbReference>
<dbReference type="PANTHER" id="PTHR12899">
    <property type="entry name" value="39S RIBOSOMAL PROTEIN L18, MITOCHONDRIAL"/>
    <property type="match status" value="1"/>
</dbReference>
<dbReference type="PANTHER" id="PTHR12899:SF3">
    <property type="entry name" value="LARGE RIBOSOMAL SUBUNIT PROTEIN UL18M"/>
    <property type="match status" value="1"/>
</dbReference>
<dbReference type="Pfam" id="PF00861">
    <property type="entry name" value="Ribosomal_L18p"/>
    <property type="match status" value="1"/>
</dbReference>
<dbReference type="SUPFAM" id="SSF53137">
    <property type="entry name" value="Translational machinery components"/>
    <property type="match status" value="1"/>
</dbReference>
<name>RL18_PSEU2</name>
<protein>
    <recommendedName>
        <fullName evidence="1">Large ribosomal subunit protein uL18</fullName>
    </recommendedName>
    <alternativeName>
        <fullName evidence="2">50S ribosomal protein L18</fullName>
    </alternativeName>
</protein>
<proteinExistence type="inferred from homology"/>
<gene>
    <name evidence="1" type="primary">rplR</name>
    <name type="ordered locus">Psyr_4532</name>
</gene>
<comment type="function">
    <text evidence="1">This is one of the proteins that bind and probably mediate the attachment of the 5S RNA into the large ribosomal subunit, where it forms part of the central protuberance.</text>
</comment>
<comment type="subunit">
    <text evidence="1">Part of the 50S ribosomal subunit; part of the 5S rRNA/L5/L18/L25 subcomplex. Contacts the 5S and 23S rRNAs.</text>
</comment>
<comment type="similarity">
    <text evidence="1">Belongs to the universal ribosomal protein uL18 family.</text>
</comment>
<organism>
    <name type="scientific">Pseudomonas syringae pv. syringae (strain B728a)</name>
    <dbReference type="NCBI Taxonomy" id="205918"/>
    <lineage>
        <taxon>Bacteria</taxon>
        <taxon>Pseudomonadati</taxon>
        <taxon>Pseudomonadota</taxon>
        <taxon>Gammaproteobacteria</taxon>
        <taxon>Pseudomonadales</taxon>
        <taxon>Pseudomonadaceae</taxon>
        <taxon>Pseudomonas</taxon>
        <taxon>Pseudomonas syringae</taxon>
    </lineage>
</organism>
<evidence type="ECO:0000255" key="1">
    <source>
        <dbReference type="HAMAP-Rule" id="MF_01337"/>
    </source>
</evidence>
<evidence type="ECO:0000305" key="2"/>
<keyword id="KW-0687">Ribonucleoprotein</keyword>
<keyword id="KW-0689">Ribosomal protein</keyword>
<keyword id="KW-0694">RNA-binding</keyword>
<keyword id="KW-0699">rRNA-binding</keyword>